<organism>
    <name type="scientific">Streptomyces coelicolor (strain ATCC BAA-471 / A3(2) / M145)</name>
    <dbReference type="NCBI Taxonomy" id="100226"/>
    <lineage>
        <taxon>Bacteria</taxon>
        <taxon>Bacillati</taxon>
        <taxon>Actinomycetota</taxon>
        <taxon>Actinomycetes</taxon>
        <taxon>Kitasatosporales</taxon>
        <taxon>Streptomycetaceae</taxon>
        <taxon>Streptomyces</taxon>
        <taxon>Streptomyces albidoflavus group</taxon>
    </lineage>
</organism>
<protein>
    <recommendedName>
        <fullName evidence="1">Adenosine 5'-phosphosulfate reductase</fullName>
        <shortName evidence="1">APS reductase</shortName>
        <ecNumber evidence="1">1.8.4.10</ecNumber>
    </recommendedName>
    <alternativeName>
        <fullName evidence="1">5'-adenylylsulfate reductase</fullName>
    </alternativeName>
    <alternativeName>
        <fullName evidence="1">Thioredoxin-dependent 5'-adenylylsulfate reductase</fullName>
    </alternativeName>
</protein>
<comment type="function">
    <text evidence="1">Catalyzes the formation of sulfite from adenosine 5'-phosphosulfate (APS) using thioredoxin as an electron donor.</text>
</comment>
<comment type="catalytic activity">
    <reaction evidence="1">
        <text>[thioredoxin]-disulfide + sulfite + AMP + 2 H(+) = adenosine 5'-phosphosulfate + [thioredoxin]-dithiol</text>
        <dbReference type="Rhea" id="RHEA:21976"/>
        <dbReference type="Rhea" id="RHEA-COMP:10698"/>
        <dbReference type="Rhea" id="RHEA-COMP:10700"/>
        <dbReference type="ChEBI" id="CHEBI:15378"/>
        <dbReference type="ChEBI" id="CHEBI:17359"/>
        <dbReference type="ChEBI" id="CHEBI:29950"/>
        <dbReference type="ChEBI" id="CHEBI:50058"/>
        <dbReference type="ChEBI" id="CHEBI:58243"/>
        <dbReference type="ChEBI" id="CHEBI:456215"/>
        <dbReference type="EC" id="1.8.4.10"/>
    </reaction>
</comment>
<comment type="cofactor">
    <cofactor evidence="1">
        <name>[4Fe-4S] cluster</name>
        <dbReference type="ChEBI" id="CHEBI:49883"/>
    </cofactor>
    <text evidence="1">Binds 1 [4Fe-4S] cluster per subunit.</text>
</comment>
<comment type="pathway">
    <text evidence="1">Sulfur metabolism; hydrogen sulfide biosynthesis; sulfite from sulfate.</text>
</comment>
<comment type="subcellular location">
    <subcellularLocation>
        <location evidence="1">Cytoplasm</location>
    </subcellularLocation>
</comment>
<comment type="similarity">
    <text evidence="1">Belongs to the PAPS reductase family. CysH subfamily.</text>
</comment>
<accession>Q9ADG3</accession>
<proteinExistence type="inferred from homology"/>
<name>CYSH_STRCO</name>
<keyword id="KW-0963">Cytoplasm</keyword>
<keyword id="KW-0408">Iron</keyword>
<keyword id="KW-0411">Iron-sulfur</keyword>
<keyword id="KW-0479">Metal-binding</keyword>
<keyword id="KW-0560">Oxidoreductase</keyword>
<keyword id="KW-1185">Reference proteome</keyword>
<feature type="chain" id="PRO_1000075077" description="Adenosine 5'-phosphosulfate reductase">
    <location>
        <begin position="1"/>
        <end position="236"/>
    </location>
</feature>
<feature type="active site" description="Nucleophile; cysteine thiosulfonate intermediate" evidence="1">
    <location>
        <position position="232"/>
    </location>
</feature>
<feature type="binding site" evidence="1">
    <location>
        <position position="123"/>
    </location>
    <ligand>
        <name>[4Fe-4S] cluster</name>
        <dbReference type="ChEBI" id="CHEBI:49883"/>
    </ligand>
</feature>
<feature type="binding site" evidence="1">
    <location>
        <position position="124"/>
    </location>
    <ligand>
        <name>[4Fe-4S] cluster</name>
        <dbReference type="ChEBI" id="CHEBI:49883"/>
    </ligand>
</feature>
<feature type="binding site" evidence="1">
    <location>
        <position position="206"/>
    </location>
    <ligand>
        <name>[4Fe-4S] cluster</name>
        <dbReference type="ChEBI" id="CHEBI:49883"/>
    </ligand>
</feature>
<feature type="binding site" evidence="1">
    <location>
        <position position="209"/>
    </location>
    <ligand>
        <name>[4Fe-4S] cluster</name>
        <dbReference type="ChEBI" id="CHEBI:49883"/>
    </ligand>
</feature>
<dbReference type="EC" id="1.8.4.10" evidence="1"/>
<dbReference type="EMBL" id="AL939126">
    <property type="protein sequence ID" value="CAC33945.1"/>
    <property type="molecule type" value="Genomic_DNA"/>
</dbReference>
<dbReference type="RefSeq" id="NP_630208.1">
    <property type="nucleotide sequence ID" value="NC_003888.3"/>
</dbReference>
<dbReference type="RefSeq" id="WP_003972820.1">
    <property type="nucleotide sequence ID" value="NZ_VNID01000009.1"/>
</dbReference>
<dbReference type="SMR" id="Q9ADG3"/>
<dbReference type="FunCoup" id="Q9ADG3">
    <property type="interactions" value="100"/>
</dbReference>
<dbReference type="STRING" id="100226.gene:17763759"/>
<dbReference type="PaxDb" id="100226-SCO6100"/>
<dbReference type="KEGG" id="sco:SCO6100"/>
<dbReference type="PATRIC" id="fig|100226.15.peg.6203"/>
<dbReference type="eggNOG" id="COG0175">
    <property type="taxonomic scope" value="Bacteria"/>
</dbReference>
<dbReference type="HOGENOM" id="CLU_044089_2_0_11"/>
<dbReference type="InParanoid" id="Q9ADG3"/>
<dbReference type="OrthoDB" id="9794018at2"/>
<dbReference type="PhylomeDB" id="Q9ADG3"/>
<dbReference type="Proteomes" id="UP000001973">
    <property type="component" value="Chromosome"/>
</dbReference>
<dbReference type="GO" id="GO:0005737">
    <property type="term" value="C:cytoplasm"/>
    <property type="evidence" value="ECO:0007669"/>
    <property type="project" value="UniProtKB-SubCell"/>
</dbReference>
<dbReference type="GO" id="GO:0051539">
    <property type="term" value="F:4 iron, 4 sulfur cluster binding"/>
    <property type="evidence" value="ECO:0007669"/>
    <property type="project" value="UniProtKB-UniRule"/>
</dbReference>
<dbReference type="GO" id="GO:0043866">
    <property type="term" value="F:adenylyl-sulfate reductase (thioredoxin) activity"/>
    <property type="evidence" value="ECO:0007669"/>
    <property type="project" value="UniProtKB-EC"/>
</dbReference>
<dbReference type="GO" id="GO:0046872">
    <property type="term" value="F:metal ion binding"/>
    <property type="evidence" value="ECO:0007669"/>
    <property type="project" value="UniProtKB-KW"/>
</dbReference>
<dbReference type="GO" id="GO:0004604">
    <property type="term" value="F:phosphoadenylyl-sulfate reductase (thioredoxin) activity"/>
    <property type="evidence" value="ECO:0000318"/>
    <property type="project" value="GO_Central"/>
</dbReference>
<dbReference type="GO" id="GO:0070814">
    <property type="term" value="P:hydrogen sulfide biosynthetic process"/>
    <property type="evidence" value="ECO:0007669"/>
    <property type="project" value="UniProtKB-UniRule"/>
</dbReference>
<dbReference type="GO" id="GO:0019379">
    <property type="term" value="P:sulfate assimilation, phosphoadenylyl sulfate reduction by phosphoadenylyl-sulfate reductase (thioredoxin)"/>
    <property type="evidence" value="ECO:0000318"/>
    <property type="project" value="GO_Central"/>
</dbReference>
<dbReference type="CDD" id="cd23945">
    <property type="entry name" value="PAPS_reductase"/>
    <property type="match status" value="1"/>
</dbReference>
<dbReference type="FunFam" id="3.40.50.620:FF:000136">
    <property type="entry name" value="Probable phosphoadenosine phosphosulfate reductase"/>
    <property type="match status" value="1"/>
</dbReference>
<dbReference type="Gene3D" id="3.40.50.620">
    <property type="entry name" value="HUPs"/>
    <property type="match status" value="1"/>
</dbReference>
<dbReference type="HAMAP" id="MF_00063">
    <property type="entry name" value="CysH"/>
    <property type="match status" value="1"/>
</dbReference>
<dbReference type="InterPro" id="IPR004511">
    <property type="entry name" value="PAPS/APS_Rdtase"/>
</dbReference>
<dbReference type="InterPro" id="IPR002500">
    <property type="entry name" value="PAPS_reduct_dom"/>
</dbReference>
<dbReference type="InterPro" id="IPR014729">
    <property type="entry name" value="Rossmann-like_a/b/a_fold"/>
</dbReference>
<dbReference type="NCBIfam" id="TIGR00434">
    <property type="entry name" value="cysH"/>
    <property type="match status" value="1"/>
</dbReference>
<dbReference type="NCBIfam" id="NF002537">
    <property type="entry name" value="PRK02090.1"/>
    <property type="match status" value="1"/>
</dbReference>
<dbReference type="PANTHER" id="PTHR46509">
    <property type="entry name" value="PHOSPHOADENOSINE PHOSPHOSULFATE REDUCTASE"/>
    <property type="match status" value="1"/>
</dbReference>
<dbReference type="PANTHER" id="PTHR46509:SF1">
    <property type="entry name" value="PHOSPHOADENOSINE PHOSPHOSULFATE REDUCTASE"/>
    <property type="match status" value="1"/>
</dbReference>
<dbReference type="Pfam" id="PF01507">
    <property type="entry name" value="PAPS_reduct"/>
    <property type="match status" value="1"/>
</dbReference>
<dbReference type="PIRSF" id="PIRSF000857">
    <property type="entry name" value="PAPS_reductase"/>
    <property type="match status" value="1"/>
</dbReference>
<dbReference type="SUPFAM" id="SSF52402">
    <property type="entry name" value="Adenine nucleotide alpha hydrolases-like"/>
    <property type="match status" value="1"/>
</dbReference>
<gene>
    <name evidence="1" type="primary">cysH</name>
    <name type="ordered locus">SCO6100</name>
    <name type="ORF">SCBAC1A6.24c</name>
</gene>
<evidence type="ECO:0000255" key="1">
    <source>
        <dbReference type="HAMAP-Rule" id="MF_00063"/>
    </source>
</evidence>
<reference key="1">
    <citation type="journal article" date="2002" name="Nature">
        <title>Complete genome sequence of the model actinomycete Streptomyces coelicolor A3(2).</title>
        <authorList>
            <person name="Bentley S.D."/>
            <person name="Chater K.F."/>
            <person name="Cerdeno-Tarraga A.-M."/>
            <person name="Challis G.L."/>
            <person name="Thomson N.R."/>
            <person name="James K.D."/>
            <person name="Harris D.E."/>
            <person name="Quail M.A."/>
            <person name="Kieser H."/>
            <person name="Harper D."/>
            <person name="Bateman A."/>
            <person name="Brown S."/>
            <person name="Chandra G."/>
            <person name="Chen C.W."/>
            <person name="Collins M."/>
            <person name="Cronin A."/>
            <person name="Fraser A."/>
            <person name="Goble A."/>
            <person name="Hidalgo J."/>
            <person name="Hornsby T."/>
            <person name="Howarth S."/>
            <person name="Huang C.-H."/>
            <person name="Kieser T."/>
            <person name="Larke L."/>
            <person name="Murphy L.D."/>
            <person name="Oliver K."/>
            <person name="O'Neil S."/>
            <person name="Rabbinowitsch E."/>
            <person name="Rajandream M.A."/>
            <person name="Rutherford K.M."/>
            <person name="Rutter S."/>
            <person name="Seeger K."/>
            <person name="Saunders D."/>
            <person name="Sharp S."/>
            <person name="Squares R."/>
            <person name="Squares S."/>
            <person name="Taylor K."/>
            <person name="Warren T."/>
            <person name="Wietzorrek A."/>
            <person name="Woodward J.R."/>
            <person name="Barrell B.G."/>
            <person name="Parkhill J."/>
            <person name="Hopwood D.A."/>
        </authorList>
    </citation>
    <scope>NUCLEOTIDE SEQUENCE [LARGE SCALE GENOMIC DNA]</scope>
    <source>
        <strain>ATCC BAA-471 / A3(2) / M145</strain>
    </source>
</reference>
<sequence length="236" mass="25957">MTAVQEERTTEELKALAERAGRELEDATALEILRWAAETFGDRFCVTSSMEDAVVAHLASRALPGVDVVFLDTGYHFPETIGTRDAVEAVMDVNVITLTPRQTVAEQDAEYGPKLHDRDPDLCCALRKVKPLEEGLAGYRAWATGLRRDESETRANTPVVGWDEKRGKVKISPIAKWSQEDVQTYVTEHGVLTNPLLTDGYASVGCAPCTRRVLEGEDARAGRWAGRSKTECGLHG</sequence>